<gene>
    <name evidence="1" type="primary">groES</name>
    <name evidence="1" type="synonym">groS</name>
    <name type="ordered locus">TTE0579</name>
</gene>
<feature type="chain" id="PRO_0000174887" description="Co-chaperonin GroES">
    <location>
        <begin position="1"/>
        <end position="94"/>
    </location>
</feature>
<accession>Q8R5T8</accession>
<proteinExistence type="inferred from homology"/>
<evidence type="ECO:0000255" key="1">
    <source>
        <dbReference type="HAMAP-Rule" id="MF_00580"/>
    </source>
</evidence>
<comment type="function">
    <text evidence="1">Together with the chaperonin GroEL, plays an essential role in assisting protein folding. The GroEL-GroES system forms a nano-cage that allows encapsulation of the non-native substrate proteins and provides a physical environment optimized to promote and accelerate protein folding. GroES binds to the apical surface of the GroEL ring, thereby capping the opening of the GroEL channel.</text>
</comment>
<comment type="subunit">
    <text evidence="1">Heptamer of 7 subunits arranged in a ring. Interacts with the chaperonin GroEL.</text>
</comment>
<comment type="subcellular location">
    <subcellularLocation>
        <location evidence="1">Cytoplasm</location>
    </subcellularLocation>
</comment>
<comment type="similarity">
    <text evidence="1">Belongs to the GroES chaperonin family.</text>
</comment>
<organism>
    <name type="scientific">Caldanaerobacter subterraneus subsp. tengcongensis (strain DSM 15242 / JCM 11007 / NBRC 100824 / MB4)</name>
    <name type="common">Thermoanaerobacter tengcongensis</name>
    <dbReference type="NCBI Taxonomy" id="273068"/>
    <lineage>
        <taxon>Bacteria</taxon>
        <taxon>Bacillati</taxon>
        <taxon>Bacillota</taxon>
        <taxon>Clostridia</taxon>
        <taxon>Thermoanaerobacterales</taxon>
        <taxon>Thermoanaerobacteraceae</taxon>
        <taxon>Caldanaerobacter</taxon>
    </lineage>
</organism>
<dbReference type="EMBL" id="AE008691">
    <property type="protein sequence ID" value="AAM23850.1"/>
    <property type="molecule type" value="Genomic_DNA"/>
</dbReference>
<dbReference type="RefSeq" id="WP_011024995.1">
    <property type="nucleotide sequence ID" value="NZ_JANUCV010000001.1"/>
</dbReference>
<dbReference type="SMR" id="Q8R5T8"/>
<dbReference type="STRING" id="273068.TTE0579"/>
<dbReference type="KEGG" id="tte:TTE0579"/>
<dbReference type="eggNOG" id="COG0234">
    <property type="taxonomic scope" value="Bacteria"/>
</dbReference>
<dbReference type="HOGENOM" id="CLU_132825_2_0_9"/>
<dbReference type="OrthoDB" id="9806791at2"/>
<dbReference type="Proteomes" id="UP000000555">
    <property type="component" value="Chromosome"/>
</dbReference>
<dbReference type="GO" id="GO:0005737">
    <property type="term" value="C:cytoplasm"/>
    <property type="evidence" value="ECO:0007669"/>
    <property type="project" value="UniProtKB-SubCell"/>
</dbReference>
<dbReference type="GO" id="GO:0005524">
    <property type="term" value="F:ATP binding"/>
    <property type="evidence" value="ECO:0007669"/>
    <property type="project" value="InterPro"/>
</dbReference>
<dbReference type="GO" id="GO:0046872">
    <property type="term" value="F:metal ion binding"/>
    <property type="evidence" value="ECO:0007669"/>
    <property type="project" value="TreeGrafter"/>
</dbReference>
<dbReference type="GO" id="GO:0044183">
    <property type="term" value="F:protein folding chaperone"/>
    <property type="evidence" value="ECO:0007669"/>
    <property type="project" value="InterPro"/>
</dbReference>
<dbReference type="GO" id="GO:0051087">
    <property type="term" value="F:protein-folding chaperone binding"/>
    <property type="evidence" value="ECO:0007669"/>
    <property type="project" value="TreeGrafter"/>
</dbReference>
<dbReference type="GO" id="GO:0051082">
    <property type="term" value="F:unfolded protein binding"/>
    <property type="evidence" value="ECO:0007669"/>
    <property type="project" value="TreeGrafter"/>
</dbReference>
<dbReference type="GO" id="GO:0051085">
    <property type="term" value="P:chaperone cofactor-dependent protein refolding"/>
    <property type="evidence" value="ECO:0007669"/>
    <property type="project" value="TreeGrafter"/>
</dbReference>
<dbReference type="CDD" id="cd00320">
    <property type="entry name" value="cpn10"/>
    <property type="match status" value="1"/>
</dbReference>
<dbReference type="FunFam" id="2.30.33.40:FF:000001">
    <property type="entry name" value="10 kDa chaperonin"/>
    <property type="match status" value="1"/>
</dbReference>
<dbReference type="Gene3D" id="2.30.33.40">
    <property type="entry name" value="GroES chaperonin"/>
    <property type="match status" value="1"/>
</dbReference>
<dbReference type="HAMAP" id="MF_00580">
    <property type="entry name" value="CH10"/>
    <property type="match status" value="1"/>
</dbReference>
<dbReference type="InterPro" id="IPR020818">
    <property type="entry name" value="Chaperonin_GroES"/>
</dbReference>
<dbReference type="InterPro" id="IPR037124">
    <property type="entry name" value="Chaperonin_GroES_sf"/>
</dbReference>
<dbReference type="InterPro" id="IPR018369">
    <property type="entry name" value="Chaprnonin_Cpn10_CS"/>
</dbReference>
<dbReference type="InterPro" id="IPR011032">
    <property type="entry name" value="GroES-like_sf"/>
</dbReference>
<dbReference type="NCBIfam" id="NF001527">
    <property type="entry name" value="PRK00364.1-2"/>
    <property type="match status" value="1"/>
</dbReference>
<dbReference type="NCBIfam" id="NF001530">
    <property type="entry name" value="PRK00364.1-6"/>
    <property type="match status" value="1"/>
</dbReference>
<dbReference type="NCBIfam" id="NF001531">
    <property type="entry name" value="PRK00364.2-2"/>
    <property type="match status" value="1"/>
</dbReference>
<dbReference type="NCBIfam" id="NF001533">
    <property type="entry name" value="PRK00364.2-4"/>
    <property type="match status" value="1"/>
</dbReference>
<dbReference type="NCBIfam" id="NF001534">
    <property type="entry name" value="PRK00364.2-5"/>
    <property type="match status" value="1"/>
</dbReference>
<dbReference type="PANTHER" id="PTHR10772">
    <property type="entry name" value="10 KDA HEAT SHOCK PROTEIN"/>
    <property type="match status" value="1"/>
</dbReference>
<dbReference type="PANTHER" id="PTHR10772:SF58">
    <property type="entry name" value="CO-CHAPERONIN GROES"/>
    <property type="match status" value="1"/>
</dbReference>
<dbReference type="Pfam" id="PF00166">
    <property type="entry name" value="Cpn10"/>
    <property type="match status" value="1"/>
</dbReference>
<dbReference type="PRINTS" id="PR00297">
    <property type="entry name" value="CHAPERONIN10"/>
</dbReference>
<dbReference type="SMART" id="SM00883">
    <property type="entry name" value="Cpn10"/>
    <property type="match status" value="1"/>
</dbReference>
<dbReference type="SUPFAM" id="SSF50129">
    <property type="entry name" value="GroES-like"/>
    <property type="match status" value="1"/>
</dbReference>
<dbReference type="PROSITE" id="PS00681">
    <property type="entry name" value="CHAPERONINS_CPN10"/>
    <property type="match status" value="1"/>
</dbReference>
<reference key="1">
    <citation type="journal article" date="2002" name="Genome Res.">
        <title>A complete sequence of the T. tengcongensis genome.</title>
        <authorList>
            <person name="Bao Q."/>
            <person name="Tian Y."/>
            <person name="Li W."/>
            <person name="Xu Z."/>
            <person name="Xuan Z."/>
            <person name="Hu S."/>
            <person name="Dong W."/>
            <person name="Yang J."/>
            <person name="Chen Y."/>
            <person name="Xue Y."/>
            <person name="Xu Y."/>
            <person name="Lai X."/>
            <person name="Huang L."/>
            <person name="Dong X."/>
            <person name="Ma Y."/>
            <person name="Ling L."/>
            <person name="Tan H."/>
            <person name="Chen R."/>
            <person name="Wang J."/>
            <person name="Yu J."/>
            <person name="Yang H."/>
        </authorList>
    </citation>
    <scope>NUCLEOTIDE SEQUENCE [LARGE SCALE GENOMIC DNA]</scope>
    <source>
        <strain>DSM 15242 / JCM 11007 / NBRC 100824 / MB4</strain>
    </source>
</reference>
<keyword id="KW-0143">Chaperone</keyword>
<keyword id="KW-0963">Cytoplasm</keyword>
<keyword id="KW-1185">Reference proteome</keyword>
<sequence length="94" mass="10276">MRLKPLGDRVVVKVIQSEEVTKGGVILPGTAKEKPQQGEVVAVGPGQYIDGKRVEPEVKVGDRVIFSKYAGTEVKLDGEEYLLLRESDILAIIE</sequence>
<protein>
    <recommendedName>
        <fullName evidence="1">Co-chaperonin GroES</fullName>
    </recommendedName>
    <alternativeName>
        <fullName evidence="1">10 kDa chaperonin</fullName>
    </alternativeName>
    <alternativeName>
        <fullName evidence="1">Chaperonin-10</fullName>
        <shortName evidence="1">Cpn10</shortName>
    </alternativeName>
</protein>
<name>CH10_CALS4</name>